<protein>
    <recommendedName>
        <fullName evidence="1">Leucine--tRNA ligase</fullName>
        <ecNumber evidence="1">6.1.1.4</ecNumber>
    </recommendedName>
    <alternativeName>
        <fullName evidence="1">Leucyl-tRNA synthetase</fullName>
        <shortName evidence="1">LeuRS</shortName>
    </alternativeName>
</protein>
<organism>
    <name type="scientific">Geobacter sulfurreducens (strain ATCC 51573 / DSM 12127 / PCA)</name>
    <dbReference type="NCBI Taxonomy" id="243231"/>
    <lineage>
        <taxon>Bacteria</taxon>
        <taxon>Pseudomonadati</taxon>
        <taxon>Thermodesulfobacteriota</taxon>
        <taxon>Desulfuromonadia</taxon>
        <taxon>Geobacterales</taxon>
        <taxon>Geobacteraceae</taxon>
        <taxon>Geobacter</taxon>
    </lineage>
</organism>
<feature type="chain" id="PRO_0000152020" description="Leucine--tRNA ligase">
    <location>
        <begin position="1"/>
        <end position="824"/>
    </location>
</feature>
<feature type="short sequence motif" description="'HIGH' region">
    <location>
        <begin position="42"/>
        <end position="52"/>
    </location>
</feature>
<feature type="short sequence motif" description="'KMSKS' region">
    <location>
        <begin position="581"/>
        <end position="585"/>
    </location>
</feature>
<feature type="binding site" evidence="1">
    <location>
        <position position="584"/>
    </location>
    <ligand>
        <name>ATP</name>
        <dbReference type="ChEBI" id="CHEBI:30616"/>
    </ligand>
</feature>
<reference key="1">
    <citation type="journal article" date="2003" name="Science">
        <title>Genome of Geobacter sulfurreducens: metal reduction in subsurface environments.</title>
        <authorList>
            <person name="Methe B.A."/>
            <person name="Nelson K.E."/>
            <person name="Eisen J.A."/>
            <person name="Paulsen I.T."/>
            <person name="Nelson W.C."/>
            <person name="Heidelberg J.F."/>
            <person name="Wu D."/>
            <person name="Wu M."/>
            <person name="Ward N.L."/>
            <person name="Beanan M.J."/>
            <person name="Dodson R.J."/>
            <person name="Madupu R."/>
            <person name="Brinkac L.M."/>
            <person name="Daugherty S.C."/>
            <person name="DeBoy R.T."/>
            <person name="Durkin A.S."/>
            <person name="Gwinn M.L."/>
            <person name="Kolonay J.F."/>
            <person name="Sullivan S.A."/>
            <person name="Haft D.H."/>
            <person name="Selengut J."/>
            <person name="Davidsen T.M."/>
            <person name="Zafar N."/>
            <person name="White O."/>
            <person name="Tran B."/>
            <person name="Romero C."/>
            <person name="Forberger H.A."/>
            <person name="Weidman J.F."/>
            <person name="Khouri H.M."/>
            <person name="Feldblyum T.V."/>
            <person name="Utterback T.R."/>
            <person name="Van Aken S.E."/>
            <person name="Lovley D.R."/>
            <person name="Fraser C.M."/>
        </authorList>
    </citation>
    <scope>NUCLEOTIDE SEQUENCE [LARGE SCALE GENOMIC DNA]</scope>
    <source>
        <strain>ATCC 51573 / DSM 12127 / PCA</strain>
    </source>
</reference>
<comment type="catalytic activity">
    <reaction evidence="1">
        <text>tRNA(Leu) + L-leucine + ATP = L-leucyl-tRNA(Leu) + AMP + diphosphate</text>
        <dbReference type="Rhea" id="RHEA:11688"/>
        <dbReference type="Rhea" id="RHEA-COMP:9613"/>
        <dbReference type="Rhea" id="RHEA-COMP:9622"/>
        <dbReference type="ChEBI" id="CHEBI:30616"/>
        <dbReference type="ChEBI" id="CHEBI:33019"/>
        <dbReference type="ChEBI" id="CHEBI:57427"/>
        <dbReference type="ChEBI" id="CHEBI:78442"/>
        <dbReference type="ChEBI" id="CHEBI:78494"/>
        <dbReference type="ChEBI" id="CHEBI:456215"/>
        <dbReference type="EC" id="6.1.1.4"/>
    </reaction>
</comment>
<comment type="subcellular location">
    <subcellularLocation>
        <location evidence="1">Cytoplasm</location>
    </subcellularLocation>
</comment>
<comment type="similarity">
    <text evidence="1">Belongs to the class-I aminoacyl-tRNA synthetase family.</text>
</comment>
<proteinExistence type="inferred from homology"/>
<name>SYL_GEOSL</name>
<evidence type="ECO:0000255" key="1">
    <source>
        <dbReference type="HAMAP-Rule" id="MF_00049"/>
    </source>
</evidence>
<dbReference type="EC" id="6.1.1.4" evidence="1"/>
<dbReference type="EMBL" id="AE017180">
    <property type="protein sequence ID" value="AAR35585.1"/>
    <property type="molecule type" value="Genomic_DNA"/>
</dbReference>
<dbReference type="RefSeq" id="NP_953258.1">
    <property type="nucleotide sequence ID" value="NC_002939.5"/>
</dbReference>
<dbReference type="RefSeq" id="WP_010942849.1">
    <property type="nucleotide sequence ID" value="NC_002939.5"/>
</dbReference>
<dbReference type="SMR" id="Q74AZ0"/>
<dbReference type="FunCoup" id="Q74AZ0">
    <property type="interactions" value="581"/>
</dbReference>
<dbReference type="STRING" id="243231.GSU2209"/>
<dbReference type="EnsemblBacteria" id="AAR35585">
    <property type="protein sequence ID" value="AAR35585"/>
    <property type="gene ID" value="GSU2209"/>
</dbReference>
<dbReference type="KEGG" id="gsu:GSU2209"/>
<dbReference type="PATRIC" id="fig|243231.5.peg.2241"/>
<dbReference type="eggNOG" id="COG0495">
    <property type="taxonomic scope" value="Bacteria"/>
</dbReference>
<dbReference type="HOGENOM" id="CLU_004427_0_0_7"/>
<dbReference type="InParanoid" id="Q74AZ0"/>
<dbReference type="OrthoDB" id="9810365at2"/>
<dbReference type="Proteomes" id="UP000000577">
    <property type="component" value="Chromosome"/>
</dbReference>
<dbReference type="GO" id="GO:0005829">
    <property type="term" value="C:cytosol"/>
    <property type="evidence" value="ECO:0000318"/>
    <property type="project" value="GO_Central"/>
</dbReference>
<dbReference type="GO" id="GO:0002161">
    <property type="term" value="F:aminoacyl-tRNA deacylase activity"/>
    <property type="evidence" value="ECO:0007669"/>
    <property type="project" value="InterPro"/>
</dbReference>
<dbReference type="GO" id="GO:0005524">
    <property type="term" value="F:ATP binding"/>
    <property type="evidence" value="ECO:0007669"/>
    <property type="project" value="UniProtKB-UniRule"/>
</dbReference>
<dbReference type="GO" id="GO:0004823">
    <property type="term" value="F:leucine-tRNA ligase activity"/>
    <property type="evidence" value="ECO:0000318"/>
    <property type="project" value="GO_Central"/>
</dbReference>
<dbReference type="GO" id="GO:0006429">
    <property type="term" value="P:leucyl-tRNA aminoacylation"/>
    <property type="evidence" value="ECO:0000318"/>
    <property type="project" value="GO_Central"/>
</dbReference>
<dbReference type="CDD" id="cd07958">
    <property type="entry name" value="Anticodon_Ia_Leu_BEm"/>
    <property type="match status" value="1"/>
</dbReference>
<dbReference type="CDD" id="cd00812">
    <property type="entry name" value="LeuRS_core"/>
    <property type="match status" value="1"/>
</dbReference>
<dbReference type="FunFam" id="3.10.20.590:FF:000001">
    <property type="entry name" value="Leucine--tRNA ligase"/>
    <property type="match status" value="1"/>
</dbReference>
<dbReference type="FunFam" id="3.40.50.620:FF:000003">
    <property type="entry name" value="Leucine--tRNA ligase"/>
    <property type="match status" value="1"/>
</dbReference>
<dbReference type="FunFam" id="3.40.50.620:FF:000212">
    <property type="entry name" value="Leucine--tRNA ligase"/>
    <property type="match status" value="1"/>
</dbReference>
<dbReference type="FunFam" id="1.10.730.10:FF:000011">
    <property type="entry name" value="Leucine--tRNA ligase chloroplastic/mitochondrial"/>
    <property type="match status" value="1"/>
</dbReference>
<dbReference type="Gene3D" id="3.10.20.590">
    <property type="match status" value="1"/>
</dbReference>
<dbReference type="Gene3D" id="3.40.50.620">
    <property type="entry name" value="HUPs"/>
    <property type="match status" value="2"/>
</dbReference>
<dbReference type="Gene3D" id="1.10.730.10">
    <property type="entry name" value="Isoleucyl-tRNA Synthetase, Domain 1"/>
    <property type="match status" value="1"/>
</dbReference>
<dbReference type="HAMAP" id="MF_00049_B">
    <property type="entry name" value="Leu_tRNA_synth_B"/>
    <property type="match status" value="1"/>
</dbReference>
<dbReference type="InterPro" id="IPR001412">
    <property type="entry name" value="aa-tRNA-synth_I_CS"/>
</dbReference>
<dbReference type="InterPro" id="IPR002300">
    <property type="entry name" value="aa-tRNA-synth_Ia"/>
</dbReference>
<dbReference type="InterPro" id="IPR002302">
    <property type="entry name" value="Leu-tRNA-ligase"/>
</dbReference>
<dbReference type="InterPro" id="IPR025709">
    <property type="entry name" value="Leu_tRNA-synth_edit"/>
</dbReference>
<dbReference type="InterPro" id="IPR013155">
    <property type="entry name" value="M/V/L/I-tRNA-synth_anticd-bd"/>
</dbReference>
<dbReference type="InterPro" id="IPR015413">
    <property type="entry name" value="Methionyl/Leucyl_tRNA_Synth"/>
</dbReference>
<dbReference type="InterPro" id="IPR014729">
    <property type="entry name" value="Rossmann-like_a/b/a_fold"/>
</dbReference>
<dbReference type="InterPro" id="IPR009080">
    <property type="entry name" value="tRNAsynth_Ia_anticodon-bd"/>
</dbReference>
<dbReference type="InterPro" id="IPR009008">
    <property type="entry name" value="Val/Leu/Ile-tRNA-synth_edit"/>
</dbReference>
<dbReference type="NCBIfam" id="TIGR00396">
    <property type="entry name" value="leuS_bact"/>
    <property type="match status" value="1"/>
</dbReference>
<dbReference type="PANTHER" id="PTHR43740:SF2">
    <property type="entry name" value="LEUCINE--TRNA LIGASE, MITOCHONDRIAL"/>
    <property type="match status" value="1"/>
</dbReference>
<dbReference type="PANTHER" id="PTHR43740">
    <property type="entry name" value="LEUCYL-TRNA SYNTHETASE"/>
    <property type="match status" value="1"/>
</dbReference>
<dbReference type="Pfam" id="PF08264">
    <property type="entry name" value="Anticodon_1"/>
    <property type="match status" value="1"/>
</dbReference>
<dbReference type="Pfam" id="PF00133">
    <property type="entry name" value="tRNA-synt_1"/>
    <property type="match status" value="1"/>
</dbReference>
<dbReference type="Pfam" id="PF13603">
    <property type="entry name" value="tRNA-synt_1_2"/>
    <property type="match status" value="1"/>
</dbReference>
<dbReference type="Pfam" id="PF09334">
    <property type="entry name" value="tRNA-synt_1g"/>
    <property type="match status" value="1"/>
</dbReference>
<dbReference type="PRINTS" id="PR00985">
    <property type="entry name" value="TRNASYNTHLEU"/>
</dbReference>
<dbReference type="SUPFAM" id="SSF47323">
    <property type="entry name" value="Anticodon-binding domain of a subclass of class I aminoacyl-tRNA synthetases"/>
    <property type="match status" value="1"/>
</dbReference>
<dbReference type="SUPFAM" id="SSF52374">
    <property type="entry name" value="Nucleotidylyl transferase"/>
    <property type="match status" value="1"/>
</dbReference>
<dbReference type="SUPFAM" id="SSF50677">
    <property type="entry name" value="ValRS/IleRS/LeuRS editing domain"/>
    <property type="match status" value="1"/>
</dbReference>
<dbReference type="PROSITE" id="PS00178">
    <property type="entry name" value="AA_TRNA_LIGASE_I"/>
    <property type="match status" value="1"/>
</dbReference>
<accession>Q74AZ0</accession>
<sequence length="824" mass="93367">MQERYIPKNVEGKWQEIWEENKTFTVTEDPSKPKYYLLEMFPYPSGRIHMGHVRNYSIGDVVGRFKRMRGFNVLHPMGWDAFGMPAENAAIKHGSHPAKWTYENIDYMRSQLKKMGLSYDWGRELATCDVDYYKWEQKMFLEMYEKGLVYKKSSFVNWCPACETVLANEQVEDGCCWRCDSDVTQKELDQWFFRITRYAEELLEDTWNLPGWPERVLVMQRNWIGKSFGCEIDFPVEGKVEKVKVFTTRQDTLYGATFMSLAPEHPQALELTTPERRAEVEAFIDKVKKTDKIKRTAEDFEKEGVFTGAYCINPVTNLRMPVYLANFVLLDYGTGAVMAVPTHDQRDFEFARTYDLPLQVVIQPEGETLDPAAMTAAYTEVGTMVNSGPFNGMKSDEAKEKIADYLEQEGVGTKTVNYRLRDWGISRQRYWGNPIPVINCDICGVVPVPDKDLPVVLPMDAEFTGEGGNPLARVESFVNVTCPQCGAEARRETDTMDTFVQSSWYFLRYCCPDFACGPIDRARAGYWMPVDQYIGGIEHAVLHLLYSRFFTKALRDLGYVTVAEPFKNLLTQGMVIKDGAKMSKSKGNVVDPDALIERYGADTARLFTLFAAPPEKDLDWSDQGVEGSFRFLNRVWRLVFEVLPFIGSAGKPDPAALGDGARDLRRTVHKTIRKVTDDLDERFHFNTAISAVMELVNAIQSFEPKNAPENAPVLREAVESVVQLLAPFVPHVAEELWESLGHQGGVEASGWPSYDPEATVEEELLIVVQVNGKLRGKVTVAVDAGEEQVKAAAFADDKVKPWLDGKQIRKAIYVPGKLLNIVVG</sequence>
<keyword id="KW-0030">Aminoacyl-tRNA synthetase</keyword>
<keyword id="KW-0067">ATP-binding</keyword>
<keyword id="KW-0963">Cytoplasm</keyword>
<keyword id="KW-0436">Ligase</keyword>
<keyword id="KW-0547">Nucleotide-binding</keyword>
<keyword id="KW-0648">Protein biosynthesis</keyword>
<keyword id="KW-1185">Reference proteome</keyword>
<gene>
    <name evidence="1" type="primary">leuS</name>
    <name type="ordered locus">GSU2209</name>
</gene>